<protein>
    <recommendedName>
        <fullName evidence="1">NADH-quinone oxidoreductase subunit K</fullName>
        <ecNumber evidence="1">7.1.1.-</ecNumber>
    </recommendedName>
    <alternativeName>
        <fullName evidence="1">NADH dehydrogenase I subunit K</fullName>
    </alternativeName>
    <alternativeName>
        <fullName evidence="1">NDH-1 subunit K</fullName>
    </alternativeName>
</protein>
<dbReference type="EC" id="7.1.1.-" evidence="1"/>
<dbReference type="EMBL" id="CP000082">
    <property type="protein sequence ID" value="AAZ18453.1"/>
    <property type="molecule type" value="Genomic_DNA"/>
</dbReference>
<dbReference type="SMR" id="Q4FU55"/>
<dbReference type="STRING" id="259536.Psyc_0593"/>
<dbReference type="KEGG" id="par:Psyc_0593"/>
<dbReference type="eggNOG" id="COG0713">
    <property type="taxonomic scope" value="Bacteria"/>
</dbReference>
<dbReference type="HOGENOM" id="CLU_144724_0_1_6"/>
<dbReference type="Proteomes" id="UP000000546">
    <property type="component" value="Chromosome"/>
</dbReference>
<dbReference type="GO" id="GO:0030964">
    <property type="term" value="C:NADH dehydrogenase complex"/>
    <property type="evidence" value="ECO:0007669"/>
    <property type="project" value="TreeGrafter"/>
</dbReference>
<dbReference type="GO" id="GO:0005886">
    <property type="term" value="C:plasma membrane"/>
    <property type="evidence" value="ECO:0007669"/>
    <property type="project" value="UniProtKB-SubCell"/>
</dbReference>
<dbReference type="GO" id="GO:0050136">
    <property type="term" value="F:NADH:ubiquinone reductase (non-electrogenic) activity"/>
    <property type="evidence" value="ECO:0007669"/>
    <property type="project" value="UniProtKB-UniRule"/>
</dbReference>
<dbReference type="GO" id="GO:0048038">
    <property type="term" value="F:quinone binding"/>
    <property type="evidence" value="ECO:0007669"/>
    <property type="project" value="UniProtKB-KW"/>
</dbReference>
<dbReference type="GO" id="GO:0042773">
    <property type="term" value="P:ATP synthesis coupled electron transport"/>
    <property type="evidence" value="ECO:0007669"/>
    <property type="project" value="InterPro"/>
</dbReference>
<dbReference type="FunFam" id="1.10.287.3510:FF:000001">
    <property type="entry name" value="NADH-quinone oxidoreductase subunit K"/>
    <property type="match status" value="1"/>
</dbReference>
<dbReference type="Gene3D" id="1.10.287.3510">
    <property type="match status" value="1"/>
</dbReference>
<dbReference type="HAMAP" id="MF_01456">
    <property type="entry name" value="NDH1_NuoK"/>
    <property type="match status" value="1"/>
</dbReference>
<dbReference type="InterPro" id="IPR001133">
    <property type="entry name" value="NADH_UbQ_OxRdtase_chain4L/K"/>
</dbReference>
<dbReference type="InterPro" id="IPR039428">
    <property type="entry name" value="NUOK/Mnh_C1-like"/>
</dbReference>
<dbReference type="NCBIfam" id="NF004319">
    <property type="entry name" value="PRK05715.1-1"/>
    <property type="match status" value="1"/>
</dbReference>
<dbReference type="NCBIfam" id="NF004320">
    <property type="entry name" value="PRK05715.1-2"/>
    <property type="match status" value="1"/>
</dbReference>
<dbReference type="PANTHER" id="PTHR11434:SF16">
    <property type="entry name" value="NADH-UBIQUINONE OXIDOREDUCTASE CHAIN 4L"/>
    <property type="match status" value="1"/>
</dbReference>
<dbReference type="PANTHER" id="PTHR11434">
    <property type="entry name" value="NADH-UBIQUINONE OXIDOREDUCTASE SUBUNIT ND4L"/>
    <property type="match status" value="1"/>
</dbReference>
<dbReference type="Pfam" id="PF00420">
    <property type="entry name" value="Oxidored_q2"/>
    <property type="match status" value="1"/>
</dbReference>
<name>NUOK_PSYA2</name>
<comment type="function">
    <text evidence="1">NDH-1 shuttles electrons from NADH, via FMN and iron-sulfur (Fe-S) centers, to quinones in the respiratory chain. The immediate electron acceptor for the enzyme in this species is believed to be ubiquinone. Couples the redox reaction to proton translocation (for every two electrons transferred, four hydrogen ions are translocated across the cytoplasmic membrane), and thus conserves the redox energy in a proton gradient.</text>
</comment>
<comment type="catalytic activity">
    <reaction evidence="1">
        <text>a quinone + NADH + 5 H(+)(in) = a quinol + NAD(+) + 4 H(+)(out)</text>
        <dbReference type="Rhea" id="RHEA:57888"/>
        <dbReference type="ChEBI" id="CHEBI:15378"/>
        <dbReference type="ChEBI" id="CHEBI:24646"/>
        <dbReference type="ChEBI" id="CHEBI:57540"/>
        <dbReference type="ChEBI" id="CHEBI:57945"/>
        <dbReference type="ChEBI" id="CHEBI:132124"/>
    </reaction>
</comment>
<comment type="subunit">
    <text evidence="1">NDH-1 is composed of 14 different subunits. Subunits NuoA, H, J, K, L, M, N constitute the membrane sector of the complex.</text>
</comment>
<comment type="subcellular location">
    <subcellularLocation>
        <location evidence="1">Cell inner membrane</location>
        <topology evidence="1">Multi-pass membrane protein</topology>
    </subcellularLocation>
</comment>
<comment type="similarity">
    <text evidence="1">Belongs to the complex I subunit 4L family.</text>
</comment>
<sequence>MVLAASVAQEVANVPFAHEVAGLVQPVAEAQNVLGLIPMSHGLILAGILFAIGLCGVMVRRNFLFMLMSLEIMMNAAALAFVVAGSRWVDPDGQIMFIFILTLAAAEAAIGLAILLRFYHQRGHLDVDSANEMKG</sequence>
<reference key="1">
    <citation type="journal article" date="2010" name="Appl. Environ. Microbiol.">
        <title>The genome sequence of Psychrobacter arcticus 273-4, a psychroactive Siberian permafrost bacterium, reveals mechanisms for adaptation to low-temperature growth.</title>
        <authorList>
            <person name="Ayala-del-Rio H.L."/>
            <person name="Chain P.S."/>
            <person name="Grzymski J.J."/>
            <person name="Ponder M.A."/>
            <person name="Ivanova N."/>
            <person name="Bergholz P.W."/>
            <person name="Di Bartolo G."/>
            <person name="Hauser L."/>
            <person name="Land M."/>
            <person name="Bakermans C."/>
            <person name="Rodrigues D."/>
            <person name="Klappenbach J."/>
            <person name="Zarka D."/>
            <person name="Larimer F."/>
            <person name="Richardson P."/>
            <person name="Murray A."/>
            <person name="Thomashow M."/>
            <person name="Tiedje J.M."/>
        </authorList>
    </citation>
    <scope>NUCLEOTIDE SEQUENCE [LARGE SCALE GENOMIC DNA]</scope>
    <source>
        <strain>DSM 17307 / VKM B-2377 / 273-4</strain>
    </source>
</reference>
<gene>
    <name evidence="1" type="primary">nuoK</name>
    <name type="ordered locus">Psyc_0593</name>
</gene>
<keyword id="KW-0997">Cell inner membrane</keyword>
<keyword id="KW-1003">Cell membrane</keyword>
<keyword id="KW-0472">Membrane</keyword>
<keyword id="KW-0520">NAD</keyword>
<keyword id="KW-0874">Quinone</keyword>
<keyword id="KW-1185">Reference proteome</keyword>
<keyword id="KW-1278">Translocase</keyword>
<keyword id="KW-0812">Transmembrane</keyword>
<keyword id="KW-1133">Transmembrane helix</keyword>
<keyword id="KW-0813">Transport</keyword>
<keyword id="KW-0830">Ubiquinone</keyword>
<organism>
    <name type="scientific">Psychrobacter arcticus (strain DSM 17307 / VKM B-2377 / 273-4)</name>
    <dbReference type="NCBI Taxonomy" id="259536"/>
    <lineage>
        <taxon>Bacteria</taxon>
        <taxon>Pseudomonadati</taxon>
        <taxon>Pseudomonadota</taxon>
        <taxon>Gammaproteobacteria</taxon>
        <taxon>Moraxellales</taxon>
        <taxon>Moraxellaceae</taxon>
        <taxon>Psychrobacter</taxon>
    </lineage>
</organism>
<proteinExistence type="inferred from homology"/>
<feature type="chain" id="PRO_0000390178" description="NADH-quinone oxidoreductase subunit K">
    <location>
        <begin position="1"/>
        <end position="135"/>
    </location>
</feature>
<feature type="transmembrane region" description="Helical" evidence="1">
    <location>
        <begin position="33"/>
        <end position="53"/>
    </location>
</feature>
<feature type="transmembrane region" description="Helical" evidence="1">
    <location>
        <begin position="63"/>
        <end position="83"/>
    </location>
</feature>
<feature type="transmembrane region" description="Helical" evidence="1">
    <location>
        <begin position="95"/>
        <end position="115"/>
    </location>
</feature>
<accession>Q4FU55</accession>
<evidence type="ECO:0000255" key="1">
    <source>
        <dbReference type="HAMAP-Rule" id="MF_01456"/>
    </source>
</evidence>